<proteinExistence type="inferred from homology"/>
<feature type="chain" id="PRO_1000190678" description="4-diphosphocytidyl-2-C-methyl-D-erythritol kinase">
    <location>
        <begin position="1"/>
        <end position="292"/>
    </location>
</feature>
<feature type="active site" evidence="1">
    <location>
        <position position="10"/>
    </location>
</feature>
<feature type="active site" evidence="1">
    <location>
        <position position="136"/>
    </location>
</feature>
<feature type="binding site" evidence="1">
    <location>
        <begin position="94"/>
        <end position="104"/>
    </location>
    <ligand>
        <name>ATP</name>
        <dbReference type="ChEBI" id="CHEBI:30616"/>
    </ligand>
</feature>
<keyword id="KW-0067">ATP-binding</keyword>
<keyword id="KW-0414">Isoprene biosynthesis</keyword>
<keyword id="KW-0418">Kinase</keyword>
<keyword id="KW-0547">Nucleotide-binding</keyword>
<keyword id="KW-1185">Reference proteome</keyword>
<keyword id="KW-0808">Transferase</keyword>
<accession>C0ZHC9</accession>
<sequence length="292" mass="31399">MRISVKAPAKINLTLDVLAKRPDGYHEVEMVMTTVDLADRVDMTLREDGEITLDCSASFVPDDIRNHAYKAATLMKAKFQVRQGVHLYIDKQIPVAAGLAGGSSDAAATLRGLNQLWNLGLTRDELAKIGAEIGSDVPFCVYGGTALATGRGEQIAHLGAPAPCWVILAKPPIGVSTPDVYGNLRVAQIDNHPDTKQMLQAIATQDFSLMCQSLGNVLENVTLSLHPQVRQIKDLMIASGADGVLMSGSGPTVFALVQKEAKVHRIYNALRGFVKDVFVVRMLGAQEGEILA</sequence>
<gene>
    <name evidence="1" type="primary">ispE</name>
    <name type="ordered locus">BBR47_00930</name>
</gene>
<protein>
    <recommendedName>
        <fullName evidence="1">4-diphosphocytidyl-2-C-methyl-D-erythritol kinase</fullName>
        <shortName evidence="1">CMK</shortName>
        <ecNumber evidence="1">2.7.1.148</ecNumber>
    </recommendedName>
    <alternativeName>
        <fullName evidence="1">4-(cytidine-5'-diphospho)-2-C-methyl-D-erythritol kinase</fullName>
    </alternativeName>
</protein>
<reference key="1">
    <citation type="submission" date="2005-03" db="EMBL/GenBank/DDBJ databases">
        <title>Brevibacillus brevis strain 47, complete genome.</title>
        <authorList>
            <person name="Hosoyama A."/>
            <person name="Yamada R."/>
            <person name="Hongo Y."/>
            <person name="Terui Y."/>
            <person name="Ankai A."/>
            <person name="Masuyama W."/>
            <person name="Sekiguchi M."/>
            <person name="Takeda T."/>
            <person name="Asano K."/>
            <person name="Ohji S."/>
            <person name="Ichikawa N."/>
            <person name="Narita S."/>
            <person name="Aoki N."/>
            <person name="Miura H."/>
            <person name="Matsushita S."/>
            <person name="Sekigawa T."/>
            <person name="Yamagata H."/>
            <person name="Yoshikawa H."/>
            <person name="Udaka S."/>
            <person name="Tanikawa S."/>
            <person name="Fujita N."/>
        </authorList>
    </citation>
    <scope>NUCLEOTIDE SEQUENCE [LARGE SCALE GENOMIC DNA]</scope>
    <source>
        <strain>47 / JCM 6285 / NBRC 100599</strain>
    </source>
</reference>
<dbReference type="EC" id="2.7.1.148" evidence="1"/>
<dbReference type="EMBL" id="AP008955">
    <property type="protein sequence ID" value="BAH41070.1"/>
    <property type="molecule type" value="Genomic_DNA"/>
</dbReference>
<dbReference type="RefSeq" id="WP_012683867.1">
    <property type="nucleotide sequence ID" value="NC_012491.1"/>
</dbReference>
<dbReference type="SMR" id="C0ZHC9"/>
<dbReference type="STRING" id="358681.BBR47_00930"/>
<dbReference type="KEGG" id="bbe:BBR47_00930"/>
<dbReference type="eggNOG" id="COG1947">
    <property type="taxonomic scope" value="Bacteria"/>
</dbReference>
<dbReference type="HOGENOM" id="CLU_053057_1_1_9"/>
<dbReference type="UniPathway" id="UPA00056">
    <property type="reaction ID" value="UER00094"/>
</dbReference>
<dbReference type="Proteomes" id="UP000001877">
    <property type="component" value="Chromosome"/>
</dbReference>
<dbReference type="GO" id="GO:0050515">
    <property type="term" value="F:4-(cytidine 5'-diphospho)-2-C-methyl-D-erythritol kinase activity"/>
    <property type="evidence" value="ECO:0007669"/>
    <property type="project" value="UniProtKB-UniRule"/>
</dbReference>
<dbReference type="GO" id="GO:0005524">
    <property type="term" value="F:ATP binding"/>
    <property type="evidence" value="ECO:0007669"/>
    <property type="project" value="UniProtKB-UniRule"/>
</dbReference>
<dbReference type="GO" id="GO:0019288">
    <property type="term" value="P:isopentenyl diphosphate biosynthetic process, methylerythritol 4-phosphate pathway"/>
    <property type="evidence" value="ECO:0007669"/>
    <property type="project" value="UniProtKB-UniRule"/>
</dbReference>
<dbReference type="GO" id="GO:0016114">
    <property type="term" value="P:terpenoid biosynthetic process"/>
    <property type="evidence" value="ECO:0007669"/>
    <property type="project" value="InterPro"/>
</dbReference>
<dbReference type="FunFam" id="3.30.230.10:FF:000029">
    <property type="entry name" value="4-diphosphocytidyl-2-C-methyl-D-erythritol kinase"/>
    <property type="match status" value="1"/>
</dbReference>
<dbReference type="FunFam" id="3.30.70.890:FF:000006">
    <property type="entry name" value="4-diphosphocytidyl-2-C-methyl-D-erythritol kinase"/>
    <property type="match status" value="1"/>
</dbReference>
<dbReference type="Gene3D" id="3.30.230.10">
    <property type="match status" value="1"/>
</dbReference>
<dbReference type="Gene3D" id="3.30.70.890">
    <property type="entry name" value="GHMP kinase, C-terminal domain"/>
    <property type="match status" value="1"/>
</dbReference>
<dbReference type="HAMAP" id="MF_00061">
    <property type="entry name" value="IspE"/>
    <property type="match status" value="1"/>
</dbReference>
<dbReference type="InterPro" id="IPR013750">
    <property type="entry name" value="GHMP_kinase_C_dom"/>
</dbReference>
<dbReference type="InterPro" id="IPR036554">
    <property type="entry name" value="GHMP_kinase_C_sf"/>
</dbReference>
<dbReference type="InterPro" id="IPR006204">
    <property type="entry name" value="GHMP_kinase_N_dom"/>
</dbReference>
<dbReference type="InterPro" id="IPR004424">
    <property type="entry name" value="IspE"/>
</dbReference>
<dbReference type="InterPro" id="IPR020568">
    <property type="entry name" value="Ribosomal_Su5_D2-typ_SF"/>
</dbReference>
<dbReference type="InterPro" id="IPR014721">
    <property type="entry name" value="Ribsml_uS5_D2-typ_fold_subgr"/>
</dbReference>
<dbReference type="NCBIfam" id="TIGR00154">
    <property type="entry name" value="ispE"/>
    <property type="match status" value="1"/>
</dbReference>
<dbReference type="NCBIfam" id="NF011202">
    <property type="entry name" value="PRK14608.1"/>
    <property type="match status" value="1"/>
</dbReference>
<dbReference type="PANTHER" id="PTHR43527">
    <property type="entry name" value="4-DIPHOSPHOCYTIDYL-2-C-METHYL-D-ERYTHRITOL KINASE, CHLOROPLASTIC"/>
    <property type="match status" value="1"/>
</dbReference>
<dbReference type="PANTHER" id="PTHR43527:SF2">
    <property type="entry name" value="4-DIPHOSPHOCYTIDYL-2-C-METHYL-D-ERYTHRITOL KINASE, CHLOROPLASTIC"/>
    <property type="match status" value="1"/>
</dbReference>
<dbReference type="Pfam" id="PF08544">
    <property type="entry name" value="GHMP_kinases_C"/>
    <property type="match status" value="1"/>
</dbReference>
<dbReference type="Pfam" id="PF00288">
    <property type="entry name" value="GHMP_kinases_N"/>
    <property type="match status" value="1"/>
</dbReference>
<dbReference type="PIRSF" id="PIRSF010376">
    <property type="entry name" value="IspE"/>
    <property type="match status" value="1"/>
</dbReference>
<dbReference type="SUPFAM" id="SSF55060">
    <property type="entry name" value="GHMP Kinase, C-terminal domain"/>
    <property type="match status" value="1"/>
</dbReference>
<dbReference type="SUPFAM" id="SSF54211">
    <property type="entry name" value="Ribosomal protein S5 domain 2-like"/>
    <property type="match status" value="1"/>
</dbReference>
<organism>
    <name type="scientific">Brevibacillus brevis (strain 47 / JCM 6285 / NBRC 100599)</name>
    <dbReference type="NCBI Taxonomy" id="358681"/>
    <lineage>
        <taxon>Bacteria</taxon>
        <taxon>Bacillati</taxon>
        <taxon>Bacillota</taxon>
        <taxon>Bacilli</taxon>
        <taxon>Bacillales</taxon>
        <taxon>Paenibacillaceae</taxon>
        <taxon>Brevibacillus</taxon>
    </lineage>
</organism>
<evidence type="ECO:0000255" key="1">
    <source>
        <dbReference type="HAMAP-Rule" id="MF_00061"/>
    </source>
</evidence>
<comment type="function">
    <text evidence="1">Catalyzes the phosphorylation of the position 2 hydroxy group of 4-diphosphocytidyl-2C-methyl-D-erythritol.</text>
</comment>
<comment type="catalytic activity">
    <reaction evidence="1">
        <text>4-CDP-2-C-methyl-D-erythritol + ATP = 4-CDP-2-C-methyl-D-erythritol 2-phosphate + ADP + H(+)</text>
        <dbReference type="Rhea" id="RHEA:18437"/>
        <dbReference type="ChEBI" id="CHEBI:15378"/>
        <dbReference type="ChEBI" id="CHEBI:30616"/>
        <dbReference type="ChEBI" id="CHEBI:57823"/>
        <dbReference type="ChEBI" id="CHEBI:57919"/>
        <dbReference type="ChEBI" id="CHEBI:456216"/>
        <dbReference type="EC" id="2.7.1.148"/>
    </reaction>
</comment>
<comment type="pathway">
    <text evidence="1">Isoprenoid biosynthesis; isopentenyl diphosphate biosynthesis via DXP pathway; isopentenyl diphosphate from 1-deoxy-D-xylulose 5-phosphate: step 3/6.</text>
</comment>
<comment type="similarity">
    <text evidence="1">Belongs to the GHMP kinase family. IspE subfamily.</text>
</comment>
<name>ISPE_BREBN</name>